<protein>
    <recommendedName>
        <fullName>Interferon-induced GTP-binding protein Mx3</fullName>
    </recommendedName>
    <alternativeName>
        <fullName>Myxovirus resistance protein 3</fullName>
    </alternativeName>
</protein>
<organism>
    <name type="scientific">Rattus norvegicus</name>
    <name type="common">Rat</name>
    <dbReference type="NCBI Taxonomy" id="10116"/>
    <lineage>
        <taxon>Eukaryota</taxon>
        <taxon>Metazoa</taxon>
        <taxon>Chordata</taxon>
        <taxon>Craniata</taxon>
        <taxon>Vertebrata</taxon>
        <taxon>Euteleostomi</taxon>
        <taxon>Mammalia</taxon>
        <taxon>Eutheria</taxon>
        <taxon>Euarchontoglires</taxon>
        <taxon>Glires</taxon>
        <taxon>Rodentia</taxon>
        <taxon>Myomorpha</taxon>
        <taxon>Muroidea</taxon>
        <taxon>Muridae</taxon>
        <taxon>Murinae</taxon>
        <taxon>Rattus</taxon>
    </lineage>
</organism>
<feature type="chain" id="PRO_0000206601" description="Interferon-induced GTP-binding protein Mx3">
    <location>
        <begin position="1"/>
        <end position="659"/>
    </location>
</feature>
<feature type="domain" description="Dynamin-type G" evidence="3">
    <location>
        <begin position="65"/>
        <end position="338"/>
    </location>
</feature>
<feature type="domain" description="GED" evidence="2">
    <location>
        <begin position="571"/>
        <end position="659"/>
    </location>
</feature>
<feature type="region of interest" description="G1 motif" evidence="3">
    <location>
        <begin position="75"/>
        <end position="82"/>
    </location>
</feature>
<feature type="region of interest" description="G2 motif" evidence="3">
    <location>
        <begin position="100"/>
        <end position="102"/>
    </location>
</feature>
<feature type="region of interest" description="G3 motif" evidence="3">
    <location>
        <begin position="176"/>
        <end position="179"/>
    </location>
</feature>
<feature type="region of interest" description="G4 motif" evidence="3">
    <location>
        <begin position="245"/>
        <end position="248"/>
    </location>
</feature>
<feature type="region of interest" description="G5 motif" evidence="3">
    <location>
        <begin position="277"/>
        <end position="280"/>
    </location>
</feature>
<feature type="region of interest" description="Disordered" evidence="4">
    <location>
        <begin position="547"/>
        <end position="568"/>
    </location>
</feature>
<feature type="compositionally biased region" description="Polar residues" evidence="4">
    <location>
        <begin position="559"/>
        <end position="568"/>
    </location>
</feature>
<feature type="binding site" evidence="1">
    <location>
        <begin position="75"/>
        <end position="82"/>
    </location>
    <ligand>
        <name>GTP</name>
        <dbReference type="ChEBI" id="CHEBI:37565"/>
    </ligand>
</feature>
<feature type="binding site" evidence="1">
    <location>
        <begin position="176"/>
        <end position="180"/>
    </location>
    <ligand>
        <name>GTP</name>
        <dbReference type="ChEBI" id="CHEBI:37565"/>
    </ligand>
</feature>
<feature type="binding site" evidence="1">
    <location>
        <begin position="245"/>
        <end position="248"/>
    </location>
    <ligand>
        <name>GTP</name>
        <dbReference type="ChEBI" id="CHEBI:37565"/>
    </ligand>
</feature>
<accession>P18590</accession>
<name>MX3_RAT</name>
<comment type="function">
    <text>Does not show activity against influenza virus or VSV; although it only differs from Mx2 by 8 positions.</text>
</comment>
<comment type="subcellular location">
    <subcellularLocation>
        <location>Cytoplasm</location>
    </subcellularLocation>
</comment>
<comment type="induction">
    <text>By interferons.</text>
</comment>
<comment type="similarity">
    <text evidence="3">Belongs to the TRAFAC class dynamin-like GTPase superfamily. Dynamin/Fzo/YdjA family.</text>
</comment>
<evidence type="ECO:0000255" key="1"/>
<evidence type="ECO:0000255" key="2">
    <source>
        <dbReference type="PROSITE-ProRule" id="PRU00720"/>
    </source>
</evidence>
<evidence type="ECO:0000255" key="3">
    <source>
        <dbReference type="PROSITE-ProRule" id="PRU01055"/>
    </source>
</evidence>
<evidence type="ECO:0000256" key="4">
    <source>
        <dbReference type="SAM" id="MobiDB-lite"/>
    </source>
</evidence>
<sequence length="659" mass="74952">MVLSTEENRSVDLVNLPSVPLPDGEAGVGENNKDSVNNLCSQYEEKVRPCIDLIDSLRALGVEQDLALPAIAVIGDQSSGKSSVLEALSGVALPRGSGIVTRCPLVLKLKKLNQGEEWKGKVTYDDIEVELSDPSEVEEAINTGQNHIAGVGLGISDKLISLDVSSPHVPDLTLIDLPGITRVAVGNQPSDIGRQIKRLITNYIQKQETINLVVVPSNVDIATTEALSMAQEVDPDGDRTIGILTKPDLVDRGTEDKVVDVVRNLVCHLKKGYMIVKCRGQQDIQEQLSLAEALQKEQVFFKEHPQFRALLEDGKATVPCLAERLTMELISHICKSLPLLENQIKESHQSTSEELQKYGADIPEDENEKTLFLIEKINAFNQDITAIVEGEEIVREKECRLFTKLRKEFFLWSEEIERNFQKGSDALYKEVYTFEMQYRGRELPGFVNYKTFENIIRRQIKTLEEPAMEMLHKVTEIVRAAFTTVSEKNFSEFFNLHRTTKSKLEDIRLEQETEAEKAIRLHFQMEQIIYCQDQIYRKALQKVREEEAEEEERKHGKSRSAQSPNLQTSSMDEIFQHLNAYRQEAHNCISSHIPLIIQYFILKMFAEKLQKGMLQLLQDKDSCSWLLKEKSDTSEKRRFLKERLARLAQAQRRLAKFPG</sequence>
<reference key="1">
    <citation type="journal article" date="1990" name="J. Virol.">
        <title>Activity of rat Mx proteins against a rhabdovirus.</title>
        <authorList>
            <person name="Meier E."/>
            <person name="Kunz G."/>
            <person name="Haller O."/>
            <person name="Arnheiter H."/>
        </authorList>
    </citation>
    <scope>NUCLEOTIDE SEQUENCE [MRNA]</scope>
</reference>
<keyword id="KW-0963">Cytoplasm</keyword>
<keyword id="KW-0342">GTP-binding</keyword>
<keyword id="KW-0547">Nucleotide-binding</keyword>
<keyword id="KW-1185">Reference proteome</keyword>
<gene>
    <name type="primary">Mx3</name>
</gene>
<dbReference type="EMBL" id="X52713">
    <property type="protein sequence ID" value="CAA36937.1"/>
    <property type="molecule type" value="mRNA"/>
</dbReference>
<dbReference type="PIR" id="S11737">
    <property type="entry name" value="S11737"/>
</dbReference>
<dbReference type="SMR" id="P18590"/>
<dbReference type="FunCoup" id="P18590">
    <property type="interactions" value="95"/>
</dbReference>
<dbReference type="STRING" id="10116.ENSRNOP00000002695"/>
<dbReference type="PaxDb" id="10116-ENSRNOP00000002695"/>
<dbReference type="UCSC" id="RGD:628821">
    <property type="organism name" value="rat"/>
</dbReference>
<dbReference type="AGR" id="RGD:628821"/>
<dbReference type="RGD" id="621298">
    <property type="gene designation" value="Mx3"/>
</dbReference>
<dbReference type="eggNOG" id="KOG0446">
    <property type="taxonomic scope" value="Eukaryota"/>
</dbReference>
<dbReference type="InParanoid" id="P18590"/>
<dbReference type="PhylomeDB" id="P18590"/>
<dbReference type="PRO" id="PR:P18590"/>
<dbReference type="Proteomes" id="UP000002494">
    <property type="component" value="Unplaced"/>
</dbReference>
<dbReference type="GO" id="GO:0005737">
    <property type="term" value="C:cytoplasm"/>
    <property type="evidence" value="ECO:0000318"/>
    <property type="project" value="GO_Central"/>
</dbReference>
<dbReference type="GO" id="GO:0005874">
    <property type="term" value="C:microtubule"/>
    <property type="evidence" value="ECO:0000318"/>
    <property type="project" value="GO_Central"/>
</dbReference>
<dbReference type="GO" id="GO:0005634">
    <property type="term" value="C:nucleus"/>
    <property type="evidence" value="ECO:0000318"/>
    <property type="project" value="GO_Central"/>
</dbReference>
<dbReference type="GO" id="GO:0005886">
    <property type="term" value="C:plasma membrane"/>
    <property type="evidence" value="ECO:0000318"/>
    <property type="project" value="GO_Central"/>
</dbReference>
<dbReference type="GO" id="GO:0098793">
    <property type="term" value="C:presynapse"/>
    <property type="evidence" value="ECO:0007669"/>
    <property type="project" value="GOC"/>
</dbReference>
<dbReference type="GO" id="GO:0045202">
    <property type="term" value="C:synapse"/>
    <property type="evidence" value="ECO:0000318"/>
    <property type="project" value="GO_Central"/>
</dbReference>
<dbReference type="GO" id="GO:0005525">
    <property type="term" value="F:GTP binding"/>
    <property type="evidence" value="ECO:0007669"/>
    <property type="project" value="UniProtKB-KW"/>
</dbReference>
<dbReference type="GO" id="GO:0003924">
    <property type="term" value="F:GTPase activity"/>
    <property type="evidence" value="ECO:0000318"/>
    <property type="project" value="GO_Central"/>
</dbReference>
<dbReference type="GO" id="GO:0008017">
    <property type="term" value="F:microtubule binding"/>
    <property type="evidence" value="ECO:0000318"/>
    <property type="project" value="GO_Central"/>
</dbReference>
<dbReference type="GO" id="GO:0051607">
    <property type="term" value="P:defense response to virus"/>
    <property type="evidence" value="ECO:0000318"/>
    <property type="project" value="GO_Central"/>
</dbReference>
<dbReference type="GO" id="GO:0031623">
    <property type="term" value="P:receptor internalization"/>
    <property type="evidence" value="ECO:0000318"/>
    <property type="project" value="GO_Central"/>
</dbReference>
<dbReference type="GO" id="GO:0016185">
    <property type="term" value="P:synaptic vesicle budding from presynaptic endocytic zone membrane"/>
    <property type="evidence" value="ECO:0000318"/>
    <property type="project" value="GO_Central"/>
</dbReference>
<dbReference type="CDD" id="cd08771">
    <property type="entry name" value="DLP_1"/>
    <property type="match status" value="1"/>
</dbReference>
<dbReference type="FunFam" id="1.20.120.1240:FF:000007">
    <property type="entry name" value="Interferon-induced GTP-binding protein Mx1"/>
    <property type="match status" value="1"/>
</dbReference>
<dbReference type="FunFam" id="3.40.50.300:FF:000621">
    <property type="entry name" value="Interferon-induced GTP-binding protein Mx1"/>
    <property type="match status" value="1"/>
</dbReference>
<dbReference type="Gene3D" id="1.20.120.1240">
    <property type="entry name" value="Dynamin, middle domain"/>
    <property type="match status" value="1"/>
</dbReference>
<dbReference type="Gene3D" id="3.40.50.300">
    <property type="entry name" value="P-loop containing nucleotide triphosphate hydrolases"/>
    <property type="match status" value="1"/>
</dbReference>
<dbReference type="InterPro" id="IPR022812">
    <property type="entry name" value="Dynamin"/>
</dbReference>
<dbReference type="InterPro" id="IPR001401">
    <property type="entry name" value="Dynamin_GTPase"/>
</dbReference>
<dbReference type="InterPro" id="IPR019762">
    <property type="entry name" value="Dynamin_GTPase_CS"/>
</dbReference>
<dbReference type="InterPro" id="IPR045063">
    <property type="entry name" value="Dynamin_N"/>
</dbReference>
<dbReference type="InterPro" id="IPR000375">
    <property type="entry name" value="Dynamin_stalk"/>
</dbReference>
<dbReference type="InterPro" id="IPR030381">
    <property type="entry name" value="G_DYNAMIN_dom"/>
</dbReference>
<dbReference type="InterPro" id="IPR003130">
    <property type="entry name" value="GED"/>
</dbReference>
<dbReference type="InterPro" id="IPR020850">
    <property type="entry name" value="GED_dom"/>
</dbReference>
<dbReference type="InterPro" id="IPR027417">
    <property type="entry name" value="P-loop_NTPase"/>
</dbReference>
<dbReference type="PANTHER" id="PTHR11566">
    <property type="entry name" value="DYNAMIN"/>
    <property type="match status" value="1"/>
</dbReference>
<dbReference type="PANTHER" id="PTHR11566:SF217">
    <property type="entry name" value="INTERFERON-INDUCED GTP-BINDING PROTEIN MX1"/>
    <property type="match status" value="1"/>
</dbReference>
<dbReference type="Pfam" id="PF01031">
    <property type="entry name" value="Dynamin_M"/>
    <property type="match status" value="1"/>
</dbReference>
<dbReference type="Pfam" id="PF00350">
    <property type="entry name" value="Dynamin_N"/>
    <property type="match status" value="1"/>
</dbReference>
<dbReference type="Pfam" id="PF02212">
    <property type="entry name" value="GED"/>
    <property type="match status" value="1"/>
</dbReference>
<dbReference type="PRINTS" id="PR00195">
    <property type="entry name" value="DYNAMIN"/>
</dbReference>
<dbReference type="SMART" id="SM00053">
    <property type="entry name" value="DYNc"/>
    <property type="match status" value="1"/>
</dbReference>
<dbReference type="SMART" id="SM00302">
    <property type="entry name" value="GED"/>
    <property type="match status" value="1"/>
</dbReference>
<dbReference type="SUPFAM" id="SSF52540">
    <property type="entry name" value="P-loop containing nucleoside triphosphate hydrolases"/>
    <property type="match status" value="1"/>
</dbReference>
<dbReference type="PROSITE" id="PS00410">
    <property type="entry name" value="G_DYNAMIN_1"/>
    <property type="match status" value="1"/>
</dbReference>
<dbReference type="PROSITE" id="PS51718">
    <property type="entry name" value="G_DYNAMIN_2"/>
    <property type="match status" value="1"/>
</dbReference>
<dbReference type="PROSITE" id="PS51388">
    <property type="entry name" value="GED"/>
    <property type="match status" value="1"/>
</dbReference>
<proteinExistence type="evidence at transcript level"/>